<reference key="1">
    <citation type="journal article" date="2006" name="BMC Genomics">
        <title>Complete genome sequence of Shigella flexneri 5b and comparison with Shigella flexneri 2a.</title>
        <authorList>
            <person name="Nie H."/>
            <person name="Yang F."/>
            <person name="Zhang X."/>
            <person name="Yang J."/>
            <person name="Chen L."/>
            <person name="Wang J."/>
            <person name="Xiong Z."/>
            <person name="Peng J."/>
            <person name="Sun L."/>
            <person name="Dong J."/>
            <person name="Xue Y."/>
            <person name="Xu X."/>
            <person name="Chen S."/>
            <person name="Yao Z."/>
            <person name="Shen Y."/>
            <person name="Jin Q."/>
        </authorList>
    </citation>
    <scope>NUCLEOTIDE SEQUENCE [LARGE SCALE GENOMIC DNA]</scope>
    <source>
        <strain>8401</strain>
    </source>
</reference>
<proteinExistence type="inferred from homology"/>
<sequence>MTTQLEQAWELAKQRFAAVGIDVEEALRQLDRLPVSMHCWQGDDVSGFENPEGSLTGGIQATGNYPGKARNASELRADLEQAMRLIPGPKRLNLHAIYLESDTPVSRDQIKPEHFKNWVEWAKANQLGLDFNPSCFSHPLSADGFTLSHPDDSIRQFWIDHCKASRRVSAYFGEQLGTPSVMNIWIPDGMKDITVDRLAPRQRLLAALDEVISEKLNPAHHIDAVESKLFGIGAESYTVGSNEFYMGYATSRQTALCLDAGHFHPTEVISDKISAAMLYVPQLLLHVSRPVRWDSDHVVLLDDETQAIASEIVRHDLFDRVHIGLDFFDASINRIAAWVIGTRNMKKALLRALLEPTAELRKLEAAGDYTARLALLEEQKSLPRQAVWEMYCQRHDTPAGSEWLESVRAYEKAILSQRG</sequence>
<comment type="function">
    <text evidence="1">Catalyzes the interconversion of L-rhamnose and L-rhamnulose.</text>
</comment>
<comment type="catalytic activity">
    <reaction evidence="1">
        <text>L-rhamnopyranose = L-rhamnulose</text>
        <dbReference type="Rhea" id="RHEA:23160"/>
        <dbReference type="ChEBI" id="CHEBI:17897"/>
        <dbReference type="ChEBI" id="CHEBI:62346"/>
        <dbReference type="EC" id="5.3.1.14"/>
    </reaction>
</comment>
<comment type="cofactor">
    <cofactor evidence="1">
        <name>Mn(2+)</name>
        <dbReference type="ChEBI" id="CHEBI:29035"/>
    </cofactor>
    <text evidence="1">Binds 1 Mn(2+) ion per subunit.</text>
</comment>
<comment type="pathway">
    <text evidence="1">Carbohydrate degradation; L-rhamnose degradation; glycerone phosphate from L-rhamnose: step 1/3.</text>
</comment>
<comment type="subunit">
    <text evidence="1">Homotetramer.</text>
</comment>
<comment type="subcellular location">
    <subcellularLocation>
        <location evidence="1">Cytoplasm</location>
    </subcellularLocation>
</comment>
<comment type="similarity">
    <text evidence="1">Belongs to the rhamnose isomerase family.</text>
</comment>
<evidence type="ECO:0000255" key="1">
    <source>
        <dbReference type="HAMAP-Rule" id="MF_00541"/>
    </source>
</evidence>
<dbReference type="EC" id="5.3.1.14" evidence="1"/>
<dbReference type="EMBL" id="CP000266">
    <property type="protein sequence ID" value="ABF05622.1"/>
    <property type="molecule type" value="Genomic_DNA"/>
</dbReference>
<dbReference type="RefSeq" id="WP_000211507.1">
    <property type="nucleotide sequence ID" value="NC_008258.1"/>
</dbReference>
<dbReference type="SMR" id="Q0SZ93"/>
<dbReference type="KEGG" id="sfv:SFV_3592"/>
<dbReference type="HOGENOM" id="CLU_052790_0_0_6"/>
<dbReference type="UniPathway" id="UPA00541">
    <property type="reaction ID" value="UER00601"/>
</dbReference>
<dbReference type="Proteomes" id="UP000000659">
    <property type="component" value="Chromosome"/>
</dbReference>
<dbReference type="GO" id="GO:0005737">
    <property type="term" value="C:cytoplasm"/>
    <property type="evidence" value="ECO:0007669"/>
    <property type="project" value="UniProtKB-SubCell"/>
</dbReference>
<dbReference type="GO" id="GO:0008740">
    <property type="term" value="F:L-rhamnose isomerase activity"/>
    <property type="evidence" value="ECO:0007669"/>
    <property type="project" value="UniProtKB-UniRule"/>
</dbReference>
<dbReference type="GO" id="GO:0030145">
    <property type="term" value="F:manganese ion binding"/>
    <property type="evidence" value="ECO:0007669"/>
    <property type="project" value="UniProtKB-UniRule"/>
</dbReference>
<dbReference type="GO" id="GO:0019324">
    <property type="term" value="P:L-lyxose metabolic process"/>
    <property type="evidence" value="ECO:0007669"/>
    <property type="project" value="TreeGrafter"/>
</dbReference>
<dbReference type="GO" id="GO:0019301">
    <property type="term" value="P:rhamnose catabolic process"/>
    <property type="evidence" value="ECO:0007669"/>
    <property type="project" value="UniProtKB-UniRule"/>
</dbReference>
<dbReference type="FunFam" id="3.20.20.150:FF:000006">
    <property type="entry name" value="L-rhamnose isomerase"/>
    <property type="match status" value="1"/>
</dbReference>
<dbReference type="Gene3D" id="3.20.20.150">
    <property type="entry name" value="Divalent-metal-dependent TIM barrel enzymes"/>
    <property type="match status" value="1"/>
</dbReference>
<dbReference type="HAMAP" id="MF_00541">
    <property type="entry name" value="RhaA"/>
    <property type="match status" value="1"/>
</dbReference>
<dbReference type="InterPro" id="IPR050337">
    <property type="entry name" value="L-rhamnose_isomerase"/>
</dbReference>
<dbReference type="InterPro" id="IPR009308">
    <property type="entry name" value="Rhamnose_isomerase"/>
</dbReference>
<dbReference type="InterPro" id="IPR036237">
    <property type="entry name" value="Xyl_isomerase-like_sf"/>
</dbReference>
<dbReference type="NCBIfam" id="NF002203">
    <property type="entry name" value="PRK01076.1"/>
    <property type="match status" value="1"/>
</dbReference>
<dbReference type="NCBIfam" id="TIGR01748">
    <property type="entry name" value="rhaA"/>
    <property type="match status" value="1"/>
</dbReference>
<dbReference type="PANTHER" id="PTHR30268">
    <property type="entry name" value="L-RHAMNOSE ISOMERASE"/>
    <property type="match status" value="1"/>
</dbReference>
<dbReference type="PANTHER" id="PTHR30268:SF0">
    <property type="entry name" value="L-RHAMNOSE ISOMERASE"/>
    <property type="match status" value="1"/>
</dbReference>
<dbReference type="Pfam" id="PF06134">
    <property type="entry name" value="RhaA"/>
    <property type="match status" value="1"/>
</dbReference>
<dbReference type="SUPFAM" id="SSF51658">
    <property type="entry name" value="Xylose isomerase-like"/>
    <property type="match status" value="1"/>
</dbReference>
<name>RHAA_SHIF8</name>
<gene>
    <name evidence="1" type="primary">rhaA</name>
    <name type="ordered locus">SFV_3592</name>
</gene>
<keyword id="KW-0963">Cytoplasm</keyword>
<keyword id="KW-0413">Isomerase</keyword>
<keyword id="KW-0464">Manganese</keyword>
<keyword id="KW-0479">Metal-binding</keyword>
<keyword id="KW-0684">Rhamnose metabolism</keyword>
<organism>
    <name type="scientific">Shigella flexneri serotype 5b (strain 8401)</name>
    <dbReference type="NCBI Taxonomy" id="373384"/>
    <lineage>
        <taxon>Bacteria</taxon>
        <taxon>Pseudomonadati</taxon>
        <taxon>Pseudomonadota</taxon>
        <taxon>Gammaproteobacteria</taxon>
        <taxon>Enterobacterales</taxon>
        <taxon>Enterobacteriaceae</taxon>
        <taxon>Shigella</taxon>
    </lineage>
</organism>
<protein>
    <recommendedName>
        <fullName evidence="1">L-rhamnose isomerase</fullName>
        <ecNumber evidence="1">5.3.1.14</ecNumber>
    </recommendedName>
</protein>
<feature type="chain" id="PRO_1000017722" description="L-rhamnose isomerase">
    <location>
        <begin position="1"/>
        <end position="419"/>
    </location>
</feature>
<feature type="binding site" evidence="1">
    <location>
        <position position="262"/>
    </location>
    <ligand>
        <name>Mn(2+)</name>
        <dbReference type="ChEBI" id="CHEBI:29035"/>
    </ligand>
</feature>
<feature type="binding site" evidence="1">
    <location>
        <position position="294"/>
    </location>
    <ligand>
        <name>Mn(2+)</name>
        <dbReference type="ChEBI" id="CHEBI:29035"/>
    </ligand>
</feature>
<feature type="binding site" evidence="1">
    <location>
        <position position="296"/>
    </location>
    <ligand>
        <name>Mn(2+)</name>
        <dbReference type="ChEBI" id="CHEBI:29035"/>
    </ligand>
</feature>
<accession>Q0SZ93</accession>